<dbReference type="EMBL" id="GQ180866">
    <property type="protein sequence ID" value="ACU30728.1"/>
    <property type="molecule type" value="mRNA"/>
</dbReference>
<dbReference type="SMR" id="C7DQB8"/>
<dbReference type="GO" id="GO:0005576">
    <property type="term" value="C:extracellular region"/>
    <property type="evidence" value="ECO:0007669"/>
    <property type="project" value="UniProtKB-SubCell"/>
</dbReference>
<dbReference type="GO" id="GO:0090729">
    <property type="term" value="F:toxin activity"/>
    <property type="evidence" value="ECO:0007669"/>
    <property type="project" value="UniProtKB-KW"/>
</dbReference>
<dbReference type="InterPro" id="IPR013141">
    <property type="entry name" value="Conotoxin-I_CS"/>
</dbReference>
<dbReference type="InterPro" id="IPR020242">
    <property type="entry name" value="Conotoxin_I2"/>
</dbReference>
<dbReference type="Pfam" id="PF17557">
    <property type="entry name" value="Conotoxin_I2"/>
    <property type="match status" value="1"/>
</dbReference>
<dbReference type="PROSITE" id="PS60019">
    <property type="entry name" value="I_CONOTOXIN"/>
    <property type="match status" value="1"/>
</dbReference>
<accession>C7DQB8</accession>
<evidence type="ECO:0000250" key="1"/>
<evidence type="ECO:0000250" key="2">
    <source>
        <dbReference type="UniProtKB" id="Q7Z094"/>
    </source>
</evidence>
<evidence type="ECO:0000303" key="3">
    <source>
    </source>
</evidence>
<evidence type="ECO:0000305" key="4"/>
<evidence type="ECO:0000305" key="5">
    <source>
    </source>
</evidence>
<reference key="1">
    <citation type="journal article" date="2009" name="Peptides">
        <title>Identification of novel I-superfamily conopeptides from several clades of Conus species found in the South China Sea.</title>
        <authorList>
            <person name="Liu Z."/>
            <person name="Xu N."/>
            <person name="Hu J."/>
            <person name="Zhao C."/>
            <person name="Yu Z."/>
            <person name="Dai Q."/>
        </authorList>
    </citation>
    <scope>NUCLEOTIDE SEQUENCE [MRNA]</scope>
    <source>
        <tissue>Venom duct</tissue>
    </source>
</reference>
<keyword id="KW-0027">Amidation</keyword>
<keyword id="KW-0165">Cleavage on pair of basic residues</keyword>
<keyword id="KW-1015">Disulfide bond</keyword>
<keyword id="KW-0964">Secreted</keyword>
<keyword id="KW-0732">Signal</keyword>
<keyword id="KW-0800">Toxin</keyword>
<sequence length="68" mass="7758">MMFRLTSVGCFLLVIACLNLFQVVLTRRCFPLGTFCSRYLPCCSGMCCSGWCTRRCAPRFGKRATFQE</sequence>
<name>I2B5_CONEM</name>
<protein>
    <recommendedName>
        <fullName evidence="3">Conotoxin Em11.5</fullName>
    </recommendedName>
</protein>
<comment type="subcellular location">
    <subcellularLocation>
        <location evidence="5">Secreted</location>
    </subcellularLocation>
</comment>
<comment type="tissue specificity">
    <text evidence="5">Expressed by the venom duct.</text>
</comment>
<comment type="domain">
    <text evidence="4">The cysteine framework is XI (C-C-CC-CC-C-C).</text>
</comment>
<comment type="similarity">
    <text evidence="4">Belongs to the conotoxin I2 superfamily.</text>
</comment>
<organism>
    <name type="scientific">Conus emaciatus</name>
    <name type="common">False virgin cone</name>
    <dbReference type="NCBI Taxonomy" id="89442"/>
    <lineage>
        <taxon>Eukaryota</taxon>
        <taxon>Metazoa</taxon>
        <taxon>Spiralia</taxon>
        <taxon>Lophotrochozoa</taxon>
        <taxon>Mollusca</taxon>
        <taxon>Gastropoda</taxon>
        <taxon>Caenogastropoda</taxon>
        <taxon>Neogastropoda</taxon>
        <taxon>Conoidea</taxon>
        <taxon>Conidae</taxon>
        <taxon>Conus</taxon>
        <taxon>Virgiconus</taxon>
    </lineage>
</organism>
<feature type="signal peptide" evidence="1">
    <location>
        <begin position="1"/>
        <end position="26"/>
    </location>
</feature>
<feature type="peptide" id="PRO_0000392041" description="Conotoxin Em11.5">
    <location>
        <begin position="27"/>
        <end position="60"/>
    </location>
</feature>
<feature type="propeptide" id="PRO_0000392042" evidence="1">
    <location>
        <begin position="64"/>
        <end position="68"/>
    </location>
</feature>
<feature type="modified residue" description="Phenylalanine amide" evidence="1">
    <location>
        <position position="60"/>
    </location>
</feature>
<feature type="disulfide bond" evidence="2">
    <location>
        <begin position="29"/>
        <end position="43"/>
    </location>
</feature>
<feature type="disulfide bond" evidence="2">
    <location>
        <begin position="36"/>
        <end position="48"/>
    </location>
</feature>
<feature type="disulfide bond" evidence="2">
    <location>
        <begin position="42"/>
        <end position="52"/>
    </location>
</feature>
<feature type="disulfide bond" evidence="2">
    <location>
        <begin position="47"/>
        <end position="56"/>
    </location>
</feature>
<proteinExistence type="inferred from homology"/>